<proteinExistence type="inferred from homology"/>
<reference key="1">
    <citation type="journal article" date="1999" name="Can. J. Microbiol.">
        <title>Arginine biosynthesis in Campylobacter jejuni TGH9011: determination of the argCOBD cluster.</title>
        <authorList>
            <person name="Hani E.K."/>
            <person name="Ng D."/>
            <person name="Chan V.-L."/>
        </authorList>
    </citation>
    <scope>NUCLEOTIDE SEQUENCE [GENOMIC DNA]</scope>
    <source>
        <strain>ATCC 43431 / TGH 9011 / Serotype O:3</strain>
    </source>
</reference>
<reference key="2">
    <citation type="journal article" date="2000" name="Nature">
        <title>The genome sequence of the food-borne pathogen Campylobacter jejuni reveals hypervariable sequences.</title>
        <authorList>
            <person name="Parkhill J."/>
            <person name="Wren B.W."/>
            <person name="Mungall K.L."/>
            <person name="Ketley J.M."/>
            <person name="Churcher C.M."/>
            <person name="Basham D."/>
            <person name="Chillingworth T."/>
            <person name="Davies R.M."/>
            <person name="Feltwell T."/>
            <person name="Holroyd S."/>
            <person name="Jagels K."/>
            <person name="Karlyshev A.V."/>
            <person name="Moule S."/>
            <person name="Pallen M.J."/>
            <person name="Penn C.W."/>
            <person name="Quail M.A."/>
            <person name="Rajandream M.A."/>
            <person name="Rutherford K.M."/>
            <person name="van Vliet A.H.M."/>
            <person name="Whitehead S."/>
            <person name="Barrell B.G."/>
        </authorList>
    </citation>
    <scope>NUCLEOTIDE SEQUENCE [LARGE SCALE GENOMIC DNA]</scope>
    <source>
        <strain>ATCC 700819 / NCTC 11168</strain>
    </source>
</reference>
<sequence length="342" mass="38896">MKIKVGILGASGYAGNELVRILLNHPKVEISYLGSSSSVGQNYQDLYPNTPLNLCFENKNLDELELDLLFLATPHKFSAKLLNENLLKKMKIIDLSADFRLKNPKDYELWYKFTHPNQELLQNAVYGLCELYKEEIKKASLVANPGCYTTCSILSLYPLFKEKIIDFSSVIIDAKSGVSGAGRSAKVENLFCEVNENIKAYNLALHRHTPEIEEHLSYAAKEKITLQFTPHLVPMQRGILISAYANLKEDLQEQDIRDIYTKYYQNNKFIRLLPPQSLPQTRWVKSSNFADINFSVDQRTKRVIVLGAIDNLIKGAAGQAVQNMNLMFDFDEDEGLKFFANL</sequence>
<organism>
    <name type="scientific">Campylobacter jejuni subsp. jejuni serotype O:2 (strain ATCC 700819 / NCTC 11168)</name>
    <dbReference type="NCBI Taxonomy" id="192222"/>
    <lineage>
        <taxon>Bacteria</taxon>
        <taxon>Pseudomonadati</taxon>
        <taxon>Campylobacterota</taxon>
        <taxon>Epsilonproteobacteria</taxon>
        <taxon>Campylobacterales</taxon>
        <taxon>Campylobacteraceae</taxon>
        <taxon>Campylobacter</taxon>
    </lineage>
</organism>
<name>ARGC_CAMJE</name>
<dbReference type="EC" id="1.2.1.38" evidence="1"/>
<dbReference type="EMBL" id="AF093219">
    <property type="protein sequence ID" value="AAF21802.1"/>
    <property type="molecule type" value="Genomic_DNA"/>
</dbReference>
<dbReference type="EMBL" id="AL111168">
    <property type="protein sequence ID" value="CAL34379.1"/>
    <property type="molecule type" value="Genomic_DNA"/>
</dbReference>
<dbReference type="PIR" id="H81439">
    <property type="entry name" value="H81439"/>
</dbReference>
<dbReference type="RefSeq" id="WP_002851634.1">
    <property type="nucleotide sequence ID" value="NZ_SZUC01000006.1"/>
</dbReference>
<dbReference type="RefSeq" id="YP_002343667.1">
    <property type="nucleotide sequence ID" value="NC_002163.1"/>
</dbReference>
<dbReference type="SMR" id="Q9PIS0"/>
<dbReference type="IntAct" id="Q9PIS0">
    <property type="interactions" value="35"/>
</dbReference>
<dbReference type="STRING" id="192222.Cj0224"/>
<dbReference type="PaxDb" id="192222-Cj0224"/>
<dbReference type="EnsemblBacteria" id="CAL34379">
    <property type="protein sequence ID" value="CAL34379"/>
    <property type="gene ID" value="Cj0224"/>
</dbReference>
<dbReference type="GeneID" id="906012"/>
<dbReference type="KEGG" id="cje:Cj0224"/>
<dbReference type="PATRIC" id="fig|192222.6.peg.218"/>
<dbReference type="eggNOG" id="COG0002">
    <property type="taxonomic scope" value="Bacteria"/>
</dbReference>
<dbReference type="HOGENOM" id="CLU_006384_0_1_7"/>
<dbReference type="OrthoDB" id="9801289at2"/>
<dbReference type="UniPathway" id="UPA00068">
    <property type="reaction ID" value="UER00108"/>
</dbReference>
<dbReference type="Proteomes" id="UP000000799">
    <property type="component" value="Chromosome"/>
</dbReference>
<dbReference type="GO" id="GO:0005737">
    <property type="term" value="C:cytoplasm"/>
    <property type="evidence" value="ECO:0007669"/>
    <property type="project" value="UniProtKB-SubCell"/>
</dbReference>
<dbReference type="GO" id="GO:0003942">
    <property type="term" value="F:N-acetyl-gamma-glutamyl-phosphate reductase activity"/>
    <property type="evidence" value="ECO:0007669"/>
    <property type="project" value="UniProtKB-UniRule"/>
</dbReference>
<dbReference type="GO" id="GO:0051287">
    <property type="term" value="F:NAD binding"/>
    <property type="evidence" value="ECO:0007669"/>
    <property type="project" value="InterPro"/>
</dbReference>
<dbReference type="GO" id="GO:0070401">
    <property type="term" value="F:NADP+ binding"/>
    <property type="evidence" value="ECO:0007669"/>
    <property type="project" value="InterPro"/>
</dbReference>
<dbReference type="GO" id="GO:0006526">
    <property type="term" value="P:L-arginine biosynthetic process"/>
    <property type="evidence" value="ECO:0007669"/>
    <property type="project" value="UniProtKB-UniRule"/>
</dbReference>
<dbReference type="CDD" id="cd23934">
    <property type="entry name" value="AGPR_1_C"/>
    <property type="match status" value="1"/>
</dbReference>
<dbReference type="CDD" id="cd17895">
    <property type="entry name" value="AGPR_1_N"/>
    <property type="match status" value="1"/>
</dbReference>
<dbReference type="FunFam" id="3.30.360.10:FF:000014">
    <property type="entry name" value="N-acetyl-gamma-glutamyl-phosphate reductase"/>
    <property type="match status" value="1"/>
</dbReference>
<dbReference type="Gene3D" id="3.30.360.10">
    <property type="entry name" value="Dihydrodipicolinate Reductase, domain 2"/>
    <property type="match status" value="1"/>
</dbReference>
<dbReference type="Gene3D" id="3.40.50.720">
    <property type="entry name" value="NAD(P)-binding Rossmann-like Domain"/>
    <property type="match status" value="1"/>
</dbReference>
<dbReference type="HAMAP" id="MF_00150">
    <property type="entry name" value="ArgC_type1"/>
    <property type="match status" value="1"/>
</dbReference>
<dbReference type="InterPro" id="IPR023013">
    <property type="entry name" value="AGPR_AS"/>
</dbReference>
<dbReference type="InterPro" id="IPR000706">
    <property type="entry name" value="AGPR_type-1"/>
</dbReference>
<dbReference type="InterPro" id="IPR036291">
    <property type="entry name" value="NAD(P)-bd_dom_sf"/>
</dbReference>
<dbReference type="InterPro" id="IPR050085">
    <property type="entry name" value="NAGSA_dehydrogenase"/>
</dbReference>
<dbReference type="InterPro" id="IPR000534">
    <property type="entry name" value="Semialdehyde_DH_NAD-bd"/>
</dbReference>
<dbReference type="NCBIfam" id="TIGR01850">
    <property type="entry name" value="argC"/>
    <property type="match status" value="1"/>
</dbReference>
<dbReference type="PANTHER" id="PTHR32338:SF10">
    <property type="entry name" value="N-ACETYL-GAMMA-GLUTAMYL-PHOSPHATE REDUCTASE, CHLOROPLASTIC-RELATED"/>
    <property type="match status" value="1"/>
</dbReference>
<dbReference type="PANTHER" id="PTHR32338">
    <property type="entry name" value="N-ACETYL-GAMMA-GLUTAMYL-PHOSPHATE REDUCTASE, CHLOROPLASTIC-RELATED-RELATED"/>
    <property type="match status" value="1"/>
</dbReference>
<dbReference type="Pfam" id="PF01118">
    <property type="entry name" value="Semialdhyde_dh"/>
    <property type="match status" value="1"/>
</dbReference>
<dbReference type="Pfam" id="PF22698">
    <property type="entry name" value="Semialdhyde_dhC_1"/>
    <property type="match status" value="1"/>
</dbReference>
<dbReference type="SMART" id="SM00859">
    <property type="entry name" value="Semialdhyde_dh"/>
    <property type="match status" value="1"/>
</dbReference>
<dbReference type="SUPFAM" id="SSF55347">
    <property type="entry name" value="Glyceraldehyde-3-phosphate dehydrogenase-like, C-terminal domain"/>
    <property type="match status" value="1"/>
</dbReference>
<dbReference type="SUPFAM" id="SSF51735">
    <property type="entry name" value="NAD(P)-binding Rossmann-fold domains"/>
    <property type="match status" value="1"/>
</dbReference>
<dbReference type="PROSITE" id="PS01224">
    <property type="entry name" value="ARGC"/>
    <property type="match status" value="1"/>
</dbReference>
<comment type="function">
    <text evidence="1">Catalyzes the NADPH-dependent reduction of N-acetyl-5-glutamyl phosphate to yield N-acetyl-L-glutamate 5-semialdehyde.</text>
</comment>
<comment type="catalytic activity">
    <reaction evidence="1">
        <text>N-acetyl-L-glutamate 5-semialdehyde + phosphate + NADP(+) = N-acetyl-L-glutamyl 5-phosphate + NADPH + H(+)</text>
        <dbReference type="Rhea" id="RHEA:21588"/>
        <dbReference type="ChEBI" id="CHEBI:15378"/>
        <dbReference type="ChEBI" id="CHEBI:29123"/>
        <dbReference type="ChEBI" id="CHEBI:43474"/>
        <dbReference type="ChEBI" id="CHEBI:57783"/>
        <dbReference type="ChEBI" id="CHEBI:57936"/>
        <dbReference type="ChEBI" id="CHEBI:58349"/>
        <dbReference type="EC" id="1.2.1.38"/>
    </reaction>
</comment>
<comment type="pathway">
    <text evidence="1">Amino-acid biosynthesis; L-arginine biosynthesis; N(2)-acetyl-L-ornithine from L-glutamate: step 3/4.</text>
</comment>
<comment type="subcellular location">
    <subcellularLocation>
        <location evidence="1">Cytoplasm</location>
    </subcellularLocation>
</comment>
<comment type="similarity">
    <text evidence="1">Belongs to the NAGSA dehydrogenase family. Type 1 subfamily.</text>
</comment>
<protein>
    <recommendedName>
        <fullName evidence="1">N-acetyl-gamma-glutamyl-phosphate reductase</fullName>
        <shortName evidence="1">AGPR</shortName>
        <ecNumber evidence="1">1.2.1.38</ecNumber>
    </recommendedName>
    <alternativeName>
        <fullName evidence="1">N-acetyl-glutamate semialdehyde dehydrogenase</fullName>
        <shortName evidence="1">NAGSA dehydrogenase</shortName>
    </alternativeName>
</protein>
<accession>Q9PIS0</accession>
<accession>Q0PBT0</accession>
<accession>Q9RH00</accession>
<keyword id="KW-0028">Amino-acid biosynthesis</keyword>
<keyword id="KW-0055">Arginine biosynthesis</keyword>
<keyword id="KW-0963">Cytoplasm</keyword>
<keyword id="KW-0521">NADP</keyword>
<keyword id="KW-0560">Oxidoreductase</keyword>
<keyword id="KW-1185">Reference proteome</keyword>
<evidence type="ECO:0000255" key="1">
    <source>
        <dbReference type="HAMAP-Rule" id="MF_00150"/>
    </source>
</evidence>
<evidence type="ECO:0000305" key="2"/>
<gene>
    <name evidence="1" type="primary">argC</name>
    <name type="ordered locus">Cj0224</name>
</gene>
<feature type="chain" id="PRO_0000112393" description="N-acetyl-gamma-glutamyl-phosphate reductase">
    <location>
        <begin position="1"/>
        <end position="342"/>
    </location>
</feature>
<feature type="active site" evidence="1">
    <location>
        <position position="147"/>
    </location>
</feature>
<feature type="sequence conflict" description="In Ref. 1; AAF21802." evidence="2" ref="1">
    <original>K</original>
    <variation>E</variation>
    <location>
        <position position="76"/>
    </location>
</feature>
<feature type="sequence conflict" description="In Ref. 1; AAF21802." evidence="2" ref="1">
    <original>E</original>
    <variation>D</variation>
    <location>
        <position position="119"/>
    </location>
</feature>
<feature type="sequence conflict" description="In Ref. 1; AAF21802." evidence="2" ref="1">
    <original>S</original>
    <variation>N</variation>
    <location>
        <position position="168"/>
    </location>
</feature>
<feature type="sequence conflict" description="In Ref. 1; AAF21802." evidence="2" ref="1">
    <original>V</original>
    <variation>I</variation>
    <location>
        <position position="194"/>
    </location>
</feature>
<feature type="sequence conflict" description="In Ref. 1; AAF21802." evidence="2" ref="1">
    <original>N</original>
    <variation>G</variation>
    <location>
        <position position="202"/>
    </location>
</feature>
<feature type="sequence conflict" description="In Ref. 1; AAF21802." evidence="2" ref="1">
    <original>L</original>
    <variation>S</variation>
    <location>
        <position position="205"/>
    </location>
</feature>
<feature type="sequence conflict" description="In Ref. 1; AAF21802." evidence="2" ref="1">
    <original>V</original>
    <variation>I</variation>
    <location>
        <position position="296"/>
    </location>
</feature>